<name>ARMC1_BOVIN</name>
<proteinExistence type="evidence at transcript level"/>
<comment type="function">
    <text evidence="2">In association with mitochondrial contact site and cristae organizing system (MICOS) complex components and mitochondrial outer membrane sorting assembly machinery (SAM) complex components may regulate mitochondrial dynamics playing a role in determining mitochondrial length, distribution and motility.</text>
</comment>
<comment type="subunit">
    <text evidence="2">Interacts with mitochondrial contact site and cristae organizing system (MICOS) complex components IMMT/MIC60 and MICOS10/MIC10 (By similarity). Interacts with mitochondrial outer membrane sorting assembly machinery (SAM) complex components SAMM50 and MTX1 (By similarity).</text>
</comment>
<comment type="subcellular location">
    <subcellularLocation>
        <location evidence="2">Cytoplasm</location>
    </subcellularLocation>
    <subcellularLocation>
        <location evidence="2">Mitochondrion</location>
    </subcellularLocation>
    <subcellularLocation>
        <location evidence="2">Mitochondrion outer membrane</location>
    </subcellularLocation>
    <text evidence="2">Associates with the outer mitochondrion membrane, most likely through its C-terminus (By similarity). Not integrated into the mitochondrial outer membrane (By similarity).</text>
</comment>
<evidence type="ECO:0000250" key="1">
    <source>
        <dbReference type="UniProtKB" id="Q9D7A8"/>
    </source>
</evidence>
<evidence type="ECO:0000250" key="2">
    <source>
        <dbReference type="UniProtKB" id="Q9NVT9"/>
    </source>
</evidence>
<evidence type="ECO:0000256" key="3">
    <source>
        <dbReference type="SAM" id="MobiDB-lite"/>
    </source>
</evidence>
<evidence type="ECO:0000305" key="4"/>
<sequence length="282" mass="31280">MNSSSSTMNEEPDALSVVNQLRDLAADPLNRRAIVQDQGCLPGLILFMDHPNPPVVHSALLALRYLAECRANREKMKGELGMMLSLQNVIQKSTTPGETKLLASEIYDILQSSNMADGDSFNEMNSRRRKAQFFLGTTNKRAKTVVLHIDGLDDTSRRNLCEEALLKIKGVISFTFQMAVQRCVVRIRSDLKAEALASAIASTKVMKAQQVVKSESGEEMLVPFQDTPVEVEQNTELPDYLPEDESPTKEQDKAVSRVGSHPEGGASWLSTAANFLSRSFYW</sequence>
<reference key="1">
    <citation type="journal article" date="2005" name="BMC Genomics">
        <title>Characterization of 954 bovine full-CDS cDNA sequences.</title>
        <authorList>
            <person name="Harhay G.P."/>
            <person name="Sonstegard T.S."/>
            <person name="Keele J.W."/>
            <person name="Heaton M.P."/>
            <person name="Clawson M.L."/>
            <person name="Snelling W.M."/>
            <person name="Wiedmann R.T."/>
            <person name="Van Tassell C.P."/>
            <person name="Smith T.P.L."/>
        </authorList>
    </citation>
    <scope>NUCLEOTIDE SEQUENCE [LARGE SCALE MRNA]</scope>
</reference>
<reference key="2">
    <citation type="submission" date="2005-08" db="EMBL/GenBank/DDBJ databases">
        <authorList>
            <consortium name="NIH - Mammalian Gene Collection (MGC) project"/>
        </authorList>
    </citation>
    <scope>NUCLEOTIDE SEQUENCE [LARGE SCALE MRNA]</scope>
    <source>
        <strain>Crossbred X Angus</strain>
        <tissue>Ileum</tissue>
    </source>
</reference>
<accession>Q3ZBE1</accession>
<accession>Q5EAC8</accession>
<organism>
    <name type="scientific">Bos taurus</name>
    <name type="common">Bovine</name>
    <dbReference type="NCBI Taxonomy" id="9913"/>
    <lineage>
        <taxon>Eukaryota</taxon>
        <taxon>Metazoa</taxon>
        <taxon>Chordata</taxon>
        <taxon>Craniata</taxon>
        <taxon>Vertebrata</taxon>
        <taxon>Euteleostomi</taxon>
        <taxon>Mammalia</taxon>
        <taxon>Eutheria</taxon>
        <taxon>Laurasiatheria</taxon>
        <taxon>Artiodactyla</taxon>
        <taxon>Ruminantia</taxon>
        <taxon>Pecora</taxon>
        <taxon>Bovidae</taxon>
        <taxon>Bovinae</taxon>
        <taxon>Bos</taxon>
    </lineage>
</organism>
<keyword id="KW-0007">Acetylation</keyword>
<keyword id="KW-0963">Cytoplasm</keyword>
<keyword id="KW-0472">Membrane</keyword>
<keyword id="KW-0496">Mitochondrion</keyword>
<keyword id="KW-1000">Mitochondrion outer membrane</keyword>
<keyword id="KW-0597">Phosphoprotein</keyword>
<keyword id="KW-1185">Reference proteome</keyword>
<gene>
    <name type="primary">ARMC1</name>
</gene>
<dbReference type="EMBL" id="BT020641">
    <property type="protein sequence ID" value="AAX08658.1"/>
    <property type="molecule type" value="mRNA"/>
</dbReference>
<dbReference type="EMBL" id="BC103407">
    <property type="protein sequence ID" value="AAI03408.1"/>
    <property type="molecule type" value="mRNA"/>
</dbReference>
<dbReference type="RefSeq" id="NP_001015594.2">
    <property type="nucleotide sequence ID" value="NM_001015594.3"/>
</dbReference>
<dbReference type="SMR" id="Q3ZBE1"/>
<dbReference type="FunCoup" id="Q3ZBE1">
    <property type="interactions" value="2810"/>
</dbReference>
<dbReference type="STRING" id="9913.ENSBTAP00000021138"/>
<dbReference type="PaxDb" id="9913-ENSBTAP00000021138"/>
<dbReference type="Ensembl" id="ENSBTAT00000021138.3">
    <property type="protein sequence ID" value="ENSBTAP00000021138.2"/>
    <property type="gene ID" value="ENSBTAG00000015901.4"/>
</dbReference>
<dbReference type="GeneID" id="514000"/>
<dbReference type="KEGG" id="bta:514000"/>
<dbReference type="CTD" id="55156"/>
<dbReference type="VEuPathDB" id="HostDB:ENSBTAG00000015901"/>
<dbReference type="VGNC" id="VGNC:26155">
    <property type="gene designation" value="ARMC1"/>
</dbReference>
<dbReference type="eggNOG" id="ENOG502QU5Q">
    <property type="taxonomic scope" value="Eukaryota"/>
</dbReference>
<dbReference type="GeneTree" id="ENSGT00390000014100"/>
<dbReference type="HOGENOM" id="CLU_077781_0_0_1"/>
<dbReference type="InParanoid" id="Q3ZBE1"/>
<dbReference type="OMA" id="VNEMNSC"/>
<dbReference type="OrthoDB" id="17335at2759"/>
<dbReference type="TreeFam" id="TF316742"/>
<dbReference type="Proteomes" id="UP000009136">
    <property type="component" value="Chromosome 14"/>
</dbReference>
<dbReference type="Bgee" id="ENSBTAG00000015901">
    <property type="expression patterns" value="Expressed in oocyte and 105 other cell types or tissues"/>
</dbReference>
<dbReference type="GO" id="GO:0005829">
    <property type="term" value="C:cytosol"/>
    <property type="evidence" value="ECO:0007669"/>
    <property type="project" value="Ensembl"/>
</dbReference>
<dbReference type="GO" id="GO:0005741">
    <property type="term" value="C:mitochondrial outer membrane"/>
    <property type="evidence" value="ECO:0007669"/>
    <property type="project" value="UniProtKB-SubCell"/>
</dbReference>
<dbReference type="GO" id="GO:0046872">
    <property type="term" value="F:metal ion binding"/>
    <property type="evidence" value="ECO:0007669"/>
    <property type="project" value="InterPro"/>
</dbReference>
<dbReference type="GO" id="GO:0048312">
    <property type="term" value="P:intracellular distribution of mitochondria"/>
    <property type="evidence" value="ECO:0007669"/>
    <property type="project" value="Ensembl"/>
</dbReference>
<dbReference type="FunFam" id="1.25.10.10:FF:000365">
    <property type="entry name" value="Armadillo repeat-containing protein 1"/>
    <property type="match status" value="1"/>
</dbReference>
<dbReference type="Gene3D" id="1.25.10.10">
    <property type="entry name" value="Leucine-rich Repeat Variant"/>
    <property type="match status" value="1"/>
</dbReference>
<dbReference type="InterPro" id="IPR011989">
    <property type="entry name" value="ARM-like"/>
</dbReference>
<dbReference type="InterPro" id="IPR016024">
    <property type="entry name" value="ARM-type_fold"/>
</dbReference>
<dbReference type="InterPro" id="IPR000225">
    <property type="entry name" value="Armadillo"/>
</dbReference>
<dbReference type="InterPro" id="IPR016617">
    <property type="entry name" value="ARMC1"/>
</dbReference>
<dbReference type="InterPro" id="IPR036163">
    <property type="entry name" value="HMA_dom_sf"/>
</dbReference>
<dbReference type="PANTHER" id="PTHR46840">
    <property type="entry name" value="ARMADILLO REPEAT-CONTAINING PROTEIN 1"/>
    <property type="match status" value="1"/>
</dbReference>
<dbReference type="PANTHER" id="PTHR46840:SF1">
    <property type="entry name" value="ARMADILLO REPEAT-CONTAINING PROTEIN 1"/>
    <property type="match status" value="1"/>
</dbReference>
<dbReference type="Pfam" id="PF00514">
    <property type="entry name" value="Arm"/>
    <property type="match status" value="1"/>
</dbReference>
<dbReference type="PIRSF" id="PIRSF013899">
    <property type="entry name" value="UCP013899"/>
    <property type="match status" value="1"/>
</dbReference>
<dbReference type="SUPFAM" id="SSF48371">
    <property type="entry name" value="ARM repeat"/>
    <property type="match status" value="1"/>
</dbReference>
<dbReference type="SUPFAM" id="SSF55008">
    <property type="entry name" value="HMA, heavy metal-associated domain"/>
    <property type="match status" value="1"/>
</dbReference>
<feature type="chain" id="PRO_0000240881" description="Armadillo repeat-containing protein 1">
    <location>
        <begin position="1"/>
        <end position="282"/>
    </location>
</feature>
<feature type="repeat" description="ARM">
    <location>
        <begin position="39"/>
        <end position="81"/>
    </location>
</feature>
<feature type="region of interest" description="Disordered" evidence="3">
    <location>
        <begin position="239"/>
        <end position="261"/>
    </location>
</feature>
<feature type="compositionally biased region" description="Basic and acidic residues" evidence="3">
    <location>
        <begin position="246"/>
        <end position="255"/>
    </location>
</feature>
<feature type="modified residue" description="N-acetylmethionine" evidence="2">
    <location>
        <position position="1"/>
    </location>
</feature>
<feature type="modified residue" description="Phosphothreonine" evidence="2">
    <location>
        <position position="137"/>
    </location>
</feature>
<feature type="modified residue" description="Phosphoserine" evidence="2">
    <location>
        <position position="189"/>
    </location>
</feature>
<feature type="modified residue" description="Phosphoserine" evidence="1">
    <location>
        <position position="246"/>
    </location>
</feature>
<feature type="modified residue" description="Phosphoserine" evidence="2">
    <location>
        <position position="260"/>
    </location>
</feature>
<feature type="modified residue" description="Phosphoserine" evidence="1">
    <location>
        <position position="267"/>
    </location>
</feature>
<feature type="sequence conflict" description="In Ref. 1; AAX08658." evidence="4" ref="1">
    <original>K</original>
    <variation>Q</variation>
    <location>
        <position position="143"/>
    </location>
</feature>
<protein>
    <recommendedName>
        <fullName>Armadillo repeat-containing protein 1</fullName>
    </recommendedName>
</protein>